<comment type="function">
    <text evidence="5 7 8">Trypsin-like protease with a narrow substrate specificity. Preferentially hydrolyzes substrates with Pro in the P2 position and Val in the P3 position. Plays a role in fertilization.</text>
</comment>
<comment type="catalytic activity">
    <reaction evidence="5 8">
        <text>Hydrolyzes arginyl bonds, preferably with Pro in the P2 position.</text>
        <dbReference type="EC" id="3.4.21.99"/>
    </reaction>
</comment>
<comment type="activity regulation">
    <text evidence="5 6 8">Inhibited by peptidyl-argininals with Pro in the P2 position, diisopropyl fluorophosphate, phenylmethanesulfonyl fluoride, leupeptin, antipain, soybean trypsin inhibitor, aprotinin, ovomucoid, valyl-prolyl-arginyl-chloromethane, glycyl-valyl-arginyl-chloromethane, p-aminobenzamidine, benzamidine, zinc chloride and mercuric chloride.</text>
</comment>
<comment type="biophysicochemical properties">
    <kinetics>
        <KM evidence="5">145 uM for Boc-Val-Pro-Arg-MCA</KM>
    </kinetics>
    <phDependence>
        <text evidence="5">Optimum pH is 8.5-9.0.</text>
    </phDependence>
</comment>
<comment type="subunit">
    <text evidence="4">Heterodimer of a heavy chain and either an L1 light chain or an L2 light chain linked by a disulfide bond.</text>
</comment>
<comment type="subcellular location">
    <subcellularLocation>
        <location evidence="7">Secreted</location>
    </subcellularLocation>
    <text evidence="7">Localized on the sperm head. Released into the surrounding seawater in response to the sperm reaction, a large proportion remains associated with the sperm cell surface.</text>
</comment>
<comment type="tissue specificity">
    <text evidence="4 7">Detected in sperm, but not in unfertilized eggs (at protein level). Expressed in gonad, but not in hepatopancreas, intestine or branchial basket.</text>
</comment>
<comment type="developmental stage">
    <text evidence="7">Expression begins about half a month before the start of the spawning season (early December), and continues throughout the spawning season.</text>
</comment>
<comment type="similarity">
    <text evidence="2">Belongs to the peptidase S1 family.</text>
</comment>
<dbReference type="EC" id="3.4.21.99"/>
<dbReference type="EMBL" id="AB052776">
    <property type="protein sequence ID" value="BAB60896.1"/>
    <property type="molecule type" value="mRNA"/>
</dbReference>
<dbReference type="SMR" id="Q966V2"/>
<dbReference type="MEROPS" id="S01.082"/>
<dbReference type="KEGG" id="ag:BAB60896"/>
<dbReference type="BRENDA" id="3.4.21.99">
    <property type="organism ID" value="2564"/>
</dbReference>
<dbReference type="GO" id="GO:0005576">
    <property type="term" value="C:extracellular region"/>
    <property type="evidence" value="ECO:0007669"/>
    <property type="project" value="UniProtKB-SubCell"/>
</dbReference>
<dbReference type="GO" id="GO:0004252">
    <property type="term" value="F:serine-type endopeptidase activity"/>
    <property type="evidence" value="ECO:0007669"/>
    <property type="project" value="InterPro"/>
</dbReference>
<dbReference type="GO" id="GO:0006508">
    <property type="term" value="P:proteolysis"/>
    <property type="evidence" value="ECO:0007669"/>
    <property type="project" value="UniProtKB-KW"/>
</dbReference>
<dbReference type="CDD" id="cd00190">
    <property type="entry name" value="Tryp_SPc"/>
    <property type="match status" value="1"/>
</dbReference>
<dbReference type="FunFam" id="2.40.10.10:FF:000002">
    <property type="entry name" value="Transmembrane protease serine"/>
    <property type="match status" value="1"/>
</dbReference>
<dbReference type="Gene3D" id="2.40.10.10">
    <property type="entry name" value="Trypsin-like serine proteases"/>
    <property type="match status" value="1"/>
</dbReference>
<dbReference type="InterPro" id="IPR009003">
    <property type="entry name" value="Peptidase_S1_PA"/>
</dbReference>
<dbReference type="InterPro" id="IPR043504">
    <property type="entry name" value="Peptidase_S1_PA_chymotrypsin"/>
</dbReference>
<dbReference type="InterPro" id="IPR001314">
    <property type="entry name" value="Peptidase_S1A"/>
</dbReference>
<dbReference type="InterPro" id="IPR001254">
    <property type="entry name" value="Trypsin_dom"/>
</dbReference>
<dbReference type="InterPro" id="IPR018114">
    <property type="entry name" value="TRYPSIN_HIS"/>
</dbReference>
<dbReference type="InterPro" id="IPR033116">
    <property type="entry name" value="TRYPSIN_SER"/>
</dbReference>
<dbReference type="PANTHER" id="PTHR24252">
    <property type="entry name" value="ACROSIN-RELATED"/>
    <property type="match status" value="1"/>
</dbReference>
<dbReference type="PANTHER" id="PTHR24252:SF7">
    <property type="entry name" value="HYALIN"/>
    <property type="match status" value="1"/>
</dbReference>
<dbReference type="Pfam" id="PF00089">
    <property type="entry name" value="Trypsin"/>
    <property type="match status" value="1"/>
</dbReference>
<dbReference type="PRINTS" id="PR00722">
    <property type="entry name" value="CHYMOTRYPSIN"/>
</dbReference>
<dbReference type="SMART" id="SM00020">
    <property type="entry name" value="Tryp_SPc"/>
    <property type="match status" value="1"/>
</dbReference>
<dbReference type="SUPFAM" id="SSF50494">
    <property type="entry name" value="Trypsin-like serine proteases"/>
    <property type="match status" value="1"/>
</dbReference>
<dbReference type="PROSITE" id="PS50240">
    <property type="entry name" value="TRYPSIN_DOM"/>
    <property type="match status" value="1"/>
</dbReference>
<dbReference type="PROSITE" id="PS00134">
    <property type="entry name" value="TRYPSIN_HIS"/>
    <property type="match status" value="1"/>
</dbReference>
<dbReference type="PROSITE" id="PS00135">
    <property type="entry name" value="TRYPSIN_SER"/>
    <property type="match status" value="1"/>
</dbReference>
<name>SPRM_HALRO</name>
<keyword id="KW-0903">Direct protein sequencing</keyword>
<keyword id="KW-1015">Disulfide bond</keyword>
<keyword id="KW-0378">Hydrolase</keyword>
<keyword id="KW-0645">Protease</keyword>
<keyword id="KW-0964">Secreted</keyword>
<keyword id="KW-0720">Serine protease</keyword>
<keyword id="KW-0732">Signal</keyword>
<feature type="signal peptide" evidence="4">
    <location>
        <begin position="1"/>
        <end position="22"/>
    </location>
</feature>
<feature type="chain" id="PRO_0000395364" description="Spermosin L1 light chain" evidence="4">
    <location>
        <begin position="23"/>
        <end position="129"/>
    </location>
</feature>
<feature type="chain" id="PRO_0000395365" description="Spermosin L2 light chain" evidence="4">
    <location>
        <begin position="97"/>
        <end position="127"/>
    </location>
</feature>
<feature type="chain" id="PRO_0000395366" description="Spermosin heavy chain" evidence="4">
    <location>
        <begin position="130"/>
        <end position="388"/>
    </location>
</feature>
<feature type="domain" description="Peptidase S1" evidence="2">
    <location>
        <begin position="130"/>
        <end position="372"/>
    </location>
</feature>
<feature type="region of interest" description="Disordered" evidence="3">
    <location>
        <begin position="29"/>
        <end position="98"/>
    </location>
</feature>
<feature type="compositionally biased region" description="Polar residues" evidence="3">
    <location>
        <begin position="29"/>
        <end position="49"/>
    </location>
</feature>
<feature type="compositionally biased region" description="Pro residues" evidence="3">
    <location>
        <begin position="54"/>
        <end position="64"/>
    </location>
</feature>
<feature type="active site" description="Charge relay system" evidence="1">
    <location>
        <position position="178"/>
    </location>
</feature>
<feature type="active site" description="Charge relay system" evidence="1">
    <location>
        <position position="231"/>
    </location>
</feature>
<feature type="active site" description="Charge relay system" evidence="1">
    <location>
        <position position="324"/>
    </location>
</feature>
<feature type="disulfide bond" description="Interchain (between light and heavy chains)" evidence="2 4">
    <location>
        <begin position="116"/>
        <end position="251"/>
    </location>
</feature>
<feature type="disulfide bond" evidence="1 2">
    <location>
        <begin position="163"/>
        <end position="179"/>
    </location>
</feature>
<feature type="disulfide bond" evidence="1 2">
    <location>
        <begin position="265"/>
        <end position="330"/>
    </location>
</feature>
<feature type="disulfide bond" evidence="1 2">
    <location>
        <begin position="295"/>
        <end position="310"/>
    </location>
</feature>
<feature type="disulfide bond" evidence="1 2">
    <location>
        <begin position="320"/>
        <end position="349"/>
    </location>
</feature>
<accession>Q966V2</accession>
<protein>
    <recommendedName>
        <fullName evidence="9 11">Spermosin</fullName>
        <ecNumber>3.4.21.99</ecNumber>
    </recommendedName>
    <component>
        <recommendedName>
            <fullName evidence="9">Spermosin L1 light chain</fullName>
        </recommendedName>
    </component>
    <component>
        <recommendedName>
            <fullName evidence="9">Spermosin L2 light chain</fullName>
        </recommendedName>
    </component>
    <component>
        <recommendedName>
            <fullName evidence="9">Spermosin heavy chain</fullName>
        </recommendedName>
    </component>
</protein>
<sequence length="388" mass="42145">MAAINVIFISGAIALFALTGSCSESTNPFTNKPYATQNPYSPPQTNQPTKRPYQPGPAPTPAPYIPQKTNPPTKRPLNPTPSPTAKPPSENSESENSEGPVLIEEDHFTVDANFKCGIPPVEPDLKKGKIVGGAEAVPNSWPYAAAFGTYDISGGKLEVSQMCGSTIITPRHALTAAHCFMMDPDIDQTYYIFMGLHDETTYKGVRPNKIVGVRYHPKTNVFTDDPWLVYDFAILTLRKKVIANFAWNYACLPQPKKIPPEGTICWSVGWGVTQNTGGDNVLKQVAIDLVSEKRCKEEYRSTITSKSTICGGTTPGQDTCQGDSGGPLFCKEDGKWYLQGIVSYGPSVCGSGPMAAYAAVAYNLEWLCCYMPNLPSCEDIECDESGEN</sequence>
<organism>
    <name type="scientific">Halocynthia roretzi</name>
    <name type="common">Sea squirt</name>
    <name type="synonym">Cynthia roretzi</name>
    <dbReference type="NCBI Taxonomy" id="7729"/>
    <lineage>
        <taxon>Eukaryota</taxon>
        <taxon>Metazoa</taxon>
        <taxon>Chordata</taxon>
        <taxon>Tunicata</taxon>
        <taxon>Ascidiacea</taxon>
        <taxon>Stolidobranchia</taxon>
        <taxon>Pyuridae</taxon>
        <taxon>Halocynthia</taxon>
    </lineage>
</organism>
<reference evidence="10 11" key="1">
    <citation type="journal article" date="2002" name="Eur. J. Biochem.">
        <title>Spermosin, a trypsin-like protease from ascidian sperm: cDNA cloning, protein structures and functional analysis.</title>
        <authorList>
            <person name="Kodama E."/>
            <person name="Baba T."/>
            <person name="Kohno N."/>
            <person name="Satoh S."/>
            <person name="Yokosawa H."/>
            <person name="Sawada H."/>
        </authorList>
    </citation>
    <scope>NUCLEOTIDE SEQUENCE [MRNA]</scope>
    <scope>PROTEIN SEQUENCE OF 23-26; 97-100 AND 130-163</scope>
    <scope>SUBUNIT</scope>
    <scope>TISSUE SPECIFICITY</scope>
    <source>
        <tissue evidence="4">Gonad</tissue>
        <tissue evidence="4">Sperm</tissue>
    </source>
</reference>
<reference evidence="10" key="2">
    <citation type="journal article" date="1984" name="Dev. Biol.">
        <title>Evidence for the participation of two sperm proteases, spermosin and acrosin, in fertilization of the ascidian, Halocynthia roretzi: inhibitory effects of leupeptin analogs on enzyme activities and fertilization.</title>
        <authorList>
            <person name="Sawada H."/>
            <person name="Yokosawa H."/>
            <person name="Someno T."/>
            <person name="Saino T."/>
            <person name="Ishii S."/>
        </authorList>
    </citation>
    <scope>ACTIVITY REGULATION</scope>
</reference>
<reference evidence="10" key="3">
    <citation type="journal article" date="1984" name="J. Biol. Chem.">
        <title>Purification and characterization of two types of trypsin-like enzymes from sperm of the ascidian (Prochordata) Halocynthia roretzi. Evidence for the presence of spermosin, a novel acrosin-like enzyme.</title>
        <authorList>
            <person name="Sawada H."/>
            <person name="Yokosawa H."/>
            <person name="Ishii S."/>
        </authorList>
    </citation>
    <scope>FUNCTION</scope>
    <scope>CATALYTIC ACTIVITY</scope>
    <scope>ACTIVITY REGULATION</scope>
    <scope>BIOPHYSICOCHEMICAL PROPERTIES</scope>
</reference>
<reference evidence="10" key="4">
    <citation type="journal article" date="1996" name="Biochem. Biophys. Res. Commun.">
        <title>Localization, expression, and the role in fertilization of spermosin, an ascidian sperm trypsin-like protease.</title>
        <authorList>
            <person name="Sawada H."/>
            <person name="Iwasaki K."/>
            <person name="Kihara-Negishi F."/>
            <person name="Ariga H."/>
            <person name="Yokosawa H."/>
        </authorList>
    </citation>
    <scope>FUNCTION</scope>
    <scope>SUBCELLULAR LOCATION</scope>
    <scope>TISSUE SPECIFICITY</scope>
    <scope>DEVELOPMENTAL STAGE</scope>
</reference>
<reference evidence="10" key="5">
    <citation type="journal article" date="1996" name="Mol. Reprod. Dev.">
        <title>Substrate specificity of ascidian sperm trypsin-like proteases, spermosin and acrosin.</title>
        <authorList>
            <person name="Sawada H."/>
            <person name="Someno T."/>
        </authorList>
    </citation>
    <scope>FUNCTION</scope>
    <scope>CATALYTIC ACTIVITY</scope>
    <scope>ACTIVITY REGULATION</scope>
</reference>
<evidence type="ECO:0000250" key="1">
    <source>
        <dbReference type="UniProtKB" id="Q9CR35"/>
    </source>
</evidence>
<evidence type="ECO:0000255" key="2">
    <source>
        <dbReference type="PROSITE-ProRule" id="PRU00274"/>
    </source>
</evidence>
<evidence type="ECO:0000256" key="3">
    <source>
        <dbReference type="SAM" id="MobiDB-lite"/>
    </source>
</evidence>
<evidence type="ECO:0000269" key="4">
    <source>
    </source>
</evidence>
<evidence type="ECO:0000269" key="5">
    <source>
    </source>
</evidence>
<evidence type="ECO:0000269" key="6">
    <source>
    </source>
</evidence>
<evidence type="ECO:0000269" key="7">
    <source>
    </source>
</evidence>
<evidence type="ECO:0000269" key="8">
    <source>
    </source>
</evidence>
<evidence type="ECO:0000303" key="9">
    <source>
    </source>
</evidence>
<evidence type="ECO:0000305" key="10"/>
<evidence type="ECO:0000312" key="11">
    <source>
        <dbReference type="EMBL" id="BAB60896.1"/>
    </source>
</evidence>
<proteinExistence type="evidence at protein level"/>